<keyword id="KW-0067">ATP-binding</keyword>
<keyword id="KW-0997">Cell inner membrane</keyword>
<keyword id="KW-1003">Cell membrane</keyword>
<keyword id="KW-0472">Membrane</keyword>
<keyword id="KW-0547">Nucleotide-binding</keyword>
<keyword id="KW-0813">Transport</keyword>
<name>Y339_CHLMU</name>
<sequence>MNRDNTIAWAVDDLCVNYDHSDVLCHIAFSLPSGAMAAIIGPNGAGKSTLLKASLGLIRASSGQSLFFGQKFAKVHQRIAYMPQRASVDWDFPMTVLDLVLMGCYGYKGMWNRISTGDRREAMNILERVGLADFANRQIGKLSGGQQQRAFLARSLMQKADLYLMDELFSAIDMASYRMVVDVLQDLKKEGKTIVVIHHDLSNVRQLFDHVILLNKHLVCSGSVEKCLTKEAIFQAYGCELELLDYTLKLSRGKYQGSC</sequence>
<gene>
    <name type="ordered locus">TC_0339</name>
</gene>
<dbReference type="EMBL" id="AE002160">
    <property type="protein sequence ID" value="AAF39202.1"/>
    <property type="molecule type" value="Genomic_DNA"/>
</dbReference>
<dbReference type="PIR" id="G81714">
    <property type="entry name" value="G81714"/>
</dbReference>
<dbReference type="RefSeq" id="WP_010230210.1">
    <property type="nucleotide sequence ID" value="NZ_CP063055.1"/>
</dbReference>
<dbReference type="SMR" id="Q9PKX1"/>
<dbReference type="GeneID" id="1246383"/>
<dbReference type="KEGG" id="cmu:TC_0339"/>
<dbReference type="eggNOG" id="COG1121">
    <property type="taxonomic scope" value="Bacteria"/>
</dbReference>
<dbReference type="HOGENOM" id="CLU_000604_1_11_0"/>
<dbReference type="OrthoDB" id="9806726at2"/>
<dbReference type="Proteomes" id="UP000000800">
    <property type="component" value="Chromosome"/>
</dbReference>
<dbReference type="GO" id="GO:0005886">
    <property type="term" value="C:plasma membrane"/>
    <property type="evidence" value="ECO:0007669"/>
    <property type="project" value="UniProtKB-SubCell"/>
</dbReference>
<dbReference type="GO" id="GO:0005524">
    <property type="term" value="F:ATP binding"/>
    <property type="evidence" value="ECO:0007669"/>
    <property type="project" value="UniProtKB-KW"/>
</dbReference>
<dbReference type="GO" id="GO:0016887">
    <property type="term" value="F:ATP hydrolysis activity"/>
    <property type="evidence" value="ECO:0007669"/>
    <property type="project" value="InterPro"/>
</dbReference>
<dbReference type="CDD" id="cd03235">
    <property type="entry name" value="ABC_Metallic_Cations"/>
    <property type="match status" value="1"/>
</dbReference>
<dbReference type="FunFam" id="3.40.50.300:FF:000134">
    <property type="entry name" value="Iron-enterobactin ABC transporter ATP-binding protein"/>
    <property type="match status" value="1"/>
</dbReference>
<dbReference type="Gene3D" id="3.40.50.300">
    <property type="entry name" value="P-loop containing nucleotide triphosphate hydrolases"/>
    <property type="match status" value="1"/>
</dbReference>
<dbReference type="InterPro" id="IPR003593">
    <property type="entry name" value="AAA+_ATPase"/>
</dbReference>
<dbReference type="InterPro" id="IPR003439">
    <property type="entry name" value="ABC_transporter-like_ATP-bd"/>
</dbReference>
<dbReference type="InterPro" id="IPR017871">
    <property type="entry name" value="ABC_transporter-like_CS"/>
</dbReference>
<dbReference type="InterPro" id="IPR050153">
    <property type="entry name" value="Metal_Ion_Import_ABC"/>
</dbReference>
<dbReference type="InterPro" id="IPR027417">
    <property type="entry name" value="P-loop_NTPase"/>
</dbReference>
<dbReference type="PANTHER" id="PTHR42734:SF5">
    <property type="entry name" value="IRON TRANSPORT SYSTEM ATP-BINDING PROTEIN HI_0361-RELATED"/>
    <property type="match status" value="1"/>
</dbReference>
<dbReference type="PANTHER" id="PTHR42734">
    <property type="entry name" value="METAL TRANSPORT SYSTEM ATP-BINDING PROTEIN TM_0124-RELATED"/>
    <property type="match status" value="1"/>
</dbReference>
<dbReference type="Pfam" id="PF00005">
    <property type="entry name" value="ABC_tran"/>
    <property type="match status" value="1"/>
</dbReference>
<dbReference type="SMART" id="SM00382">
    <property type="entry name" value="AAA"/>
    <property type="match status" value="1"/>
</dbReference>
<dbReference type="SUPFAM" id="SSF52540">
    <property type="entry name" value="P-loop containing nucleoside triphosphate hydrolases"/>
    <property type="match status" value="1"/>
</dbReference>
<dbReference type="PROSITE" id="PS00211">
    <property type="entry name" value="ABC_TRANSPORTER_1"/>
    <property type="match status" value="1"/>
</dbReference>
<dbReference type="PROSITE" id="PS50893">
    <property type="entry name" value="ABC_TRANSPORTER_2"/>
    <property type="match status" value="1"/>
</dbReference>
<comment type="function">
    <text>Part of an ATP-driven transport system TC_0338/TC_0339/TC_0341/TC_0342 for a metal. Probably responsible for energy coupling to the transport system.</text>
</comment>
<comment type="subcellular location">
    <subcellularLocation>
        <location evidence="2">Cell inner membrane</location>
        <topology evidence="2">Peripheral membrane protein</topology>
    </subcellularLocation>
</comment>
<comment type="similarity">
    <text evidence="2">Belongs to the ABC transporter superfamily.</text>
</comment>
<feature type="chain" id="PRO_0000093229" description="Probable metal transport system ATP-binding protein TC_0339">
    <location>
        <begin position="1"/>
        <end position="259"/>
    </location>
</feature>
<feature type="domain" description="ABC transporter" evidence="1">
    <location>
        <begin position="9"/>
        <end position="241"/>
    </location>
</feature>
<feature type="binding site" evidence="1">
    <location>
        <begin position="41"/>
        <end position="48"/>
    </location>
    <ligand>
        <name>ATP</name>
        <dbReference type="ChEBI" id="CHEBI:30616"/>
    </ligand>
</feature>
<organism>
    <name type="scientific">Chlamydia muridarum (strain MoPn / Nigg)</name>
    <dbReference type="NCBI Taxonomy" id="243161"/>
    <lineage>
        <taxon>Bacteria</taxon>
        <taxon>Pseudomonadati</taxon>
        <taxon>Chlamydiota</taxon>
        <taxon>Chlamydiia</taxon>
        <taxon>Chlamydiales</taxon>
        <taxon>Chlamydiaceae</taxon>
        <taxon>Chlamydia/Chlamydophila group</taxon>
        <taxon>Chlamydia</taxon>
    </lineage>
</organism>
<evidence type="ECO:0000255" key="1">
    <source>
        <dbReference type="PROSITE-ProRule" id="PRU00434"/>
    </source>
</evidence>
<evidence type="ECO:0000305" key="2"/>
<accession>Q9PKX1</accession>
<reference key="1">
    <citation type="journal article" date="2000" name="Nucleic Acids Res.">
        <title>Genome sequences of Chlamydia trachomatis MoPn and Chlamydia pneumoniae AR39.</title>
        <authorList>
            <person name="Read T.D."/>
            <person name="Brunham R.C."/>
            <person name="Shen C."/>
            <person name="Gill S.R."/>
            <person name="Heidelberg J.F."/>
            <person name="White O."/>
            <person name="Hickey E.K."/>
            <person name="Peterson J.D."/>
            <person name="Utterback T.R."/>
            <person name="Berry K.J."/>
            <person name="Bass S."/>
            <person name="Linher K.D."/>
            <person name="Weidman J.F."/>
            <person name="Khouri H.M."/>
            <person name="Craven B."/>
            <person name="Bowman C."/>
            <person name="Dodson R.J."/>
            <person name="Gwinn M.L."/>
            <person name="Nelson W.C."/>
            <person name="DeBoy R.T."/>
            <person name="Kolonay J.F."/>
            <person name="McClarty G."/>
            <person name="Salzberg S.L."/>
            <person name="Eisen J.A."/>
            <person name="Fraser C.M."/>
        </authorList>
    </citation>
    <scope>NUCLEOTIDE SEQUENCE [LARGE SCALE GENOMIC DNA]</scope>
    <source>
        <strain>MoPn / Nigg</strain>
    </source>
</reference>
<protein>
    <recommendedName>
        <fullName>Probable metal transport system ATP-binding protein TC_0339</fullName>
    </recommendedName>
</protein>
<proteinExistence type="inferred from homology"/>